<gene>
    <name evidence="1" type="primary">mutS</name>
    <name type="ordered locus">Swol_0974</name>
</gene>
<organism>
    <name type="scientific">Syntrophomonas wolfei subsp. wolfei (strain DSM 2245B / Goettingen)</name>
    <dbReference type="NCBI Taxonomy" id="335541"/>
    <lineage>
        <taxon>Bacteria</taxon>
        <taxon>Bacillati</taxon>
        <taxon>Bacillota</taxon>
        <taxon>Clostridia</taxon>
        <taxon>Eubacteriales</taxon>
        <taxon>Syntrophomonadaceae</taxon>
        <taxon>Syntrophomonas</taxon>
    </lineage>
</organism>
<dbReference type="EMBL" id="CP000448">
    <property type="protein sequence ID" value="ABI68289.1"/>
    <property type="molecule type" value="Genomic_DNA"/>
</dbReference>
<dbReference type="RefSeq" id="WP_011640394.1">
    <property type="nucleotide sequence ID" value="NC_008346.1"/>
</dbReference>
<dbReference type="SMR" id="Q0AYB5"/>
<dbReference type="STRING" id="335541.Swol_0974"/>
<dbReference type="KEGG" id="swo:Swol_0974"/>
<dbReference type="eggNOG" id="COG0249">
    <property type="taxonomic scope" value="Bacteria"/>
</dbReference>
<dbReference type="HOGENOM" id="CLU_002472_4_0_9"/>
<dbReference type="OrthoDB" id="9802448at2"/>
<dbReference type="Proteomes" id="UP000001968">
    <property type="component" value="Chromosome"/>
</dbReference>
<dbReference type="GO" id="GO:0005829">
    <property type="term" value="C:cytosol"/>
    <property type="evidence" value="ECO:0007669"/>
    <property type="project" value="TreeGrafter"/>
</dbReference>
<dbReference type="GO" id="GO:0005524">
    <property type="term" value="F:ATP binding"/>
    <property type="evidence" value="ECO:0007669"/>
    <property type="project" value="UniProtKB-UniRule"/>
</dbReference>
<dbReference type="GO" id="GO:0140664">
    <property type="term" value="F:ATP-dependent DNA damage sensor activity"/>
    <property type="evidence" value="ECO:0007669"/>
    <property type="project" value="InterPro"/>
</dbReference>
<dbReference type="GO" id="GO:0003684">
    <property type="term" value="F:damaged DNA binding"/>
    <property type="evidence" value="ECO:0007669"/>
    <property type="project" value="UniProtKB-UniRule"/>
</dbReference>
<dbReference type="GO" id="GO:0030983">
    <property type="term" value="F:mismatched DNA binding"/>
    <property type="evidence" value="ECO:0007669"/>
    <property type="project" value="InterPro"/>
</dbReference>
<dbReference type="GO" id="GO:0006298">
    <property type="term" value="P:mismatch repair"/>
    <property type="evidence" value="ECO:0007669"/>
    <property type="project" value="UniProtKB-UniRule"/>
</dbReference>
<dbReference type="CDD" id="cd03284">
    <property type="entry name" value="ABC_MutS1"/>
    <property type="match status" value="1"/>
</dbReference>
<dbReference type="FunFam" id="1.10.1420.10:FF:000001">
    <property type="entry name" value="DNA mismatch repair protein MutS"/>
    <property type="match status" value="1"/>
</dbReference>
<dbReference type="FunFam" id="3.40.1170.10:FF:000001">
    <property type="entry name" value="DNA mismatch repair protein MutS"/>
    <property type="match status" value="1"/>
</dbReference>
<dbReference type="FunFam" id="3.40.50.300:FF:000870">
    <property type="entry name" value="MutS protein homolog 4"/>
    <property type="match status" value="1"/>
</dbReference>
<dbReference type="Gene3D" id="1.10.1420.10">
    <property type="match status" value="2"/>
</dbReference>
<dbReference type="Gene3D" id="6.10.140.430">
    <property type="match status" value="1"/>
</dbReference>
<dbReference type="Gene3D" id="3.40.1170.10">
    <property type="entry name" value="DNA repair protein MutS, domain I"/>
    <property type="match status" value="1"/>
</dbReference>
<dbReference type="Gene3D" id="3.30.420.110">
    <property type="entry name" value="MutS, connector domain"/>
    <property type="match status" value="1"/>
</dbReference>
<dbReference type="Gene3D" id="3.40.50.300">
    <property type="entry name" value="P-loop containing nucleotide triphosphate hydrolases"/>
    <property type="match status" value="1"/>
</dbReference>
<dbReference type="HAMAP" id="MF_00096">
    <property type="entry name" value="MutS"/>
    <property type="match status" value="1"/>
</dbReference>
<dbReference type="InterPro" id="IPR005748">
    <property type="entry name" value="DNA_mismatch_repair_MutS"/>
</dbReference>
<dbReference type="InterPro" id="IPR007695">
    <property type="entry name" value="DNA_mismatch_repair_MutS-lik_N"/>
</dbReference>
<dbReference type="InterPro" id="IPR017261">
    <property type="entry name" value="DNA_mismatch_repair_MutS/MSH"/>
</dbReference>
<dbReference type="InterPro" id="IPR000432">
    <property type="entry name" value="DNA_mismatch_repair_MutS_C"/>
</dbReference>
<dbReference type="InterPro" id="IPR007861">
    <property type="entry name" value="DNA_mismatch_repair_MutS_clamp"/>
</dbReference>
<dbReference type="InterPro" id="IPR007696">
    <property type="entry name" value="DNA_mismatch_repair_MutS_core"/>
</dbReference>
<dbReference type="InterPro" id="IPR016151">
    <property type="entry name" value="DNA_mismatch_repair_MutS_N"/>
</dbReference>
<dbReference type="InterPro" id="IPR036187">
    <property type="entry name" value="DNA_mismatch_repair_MutS_sf"/>
</dbReference>
<dbReference type="InterPro" id="IPR007860">
    <property type="entry name" value="DNA_mmatch_repair_MutS_con_dom"/>
</dbReference>
<dbReference type="InterPro" id="IPR045076">
    <property type="entry name" value="MutS"/>
</dbReference>
<dbReference type="InterPro" id="IPR036678">
    <property type="entry name" value="MutS_con_dom_sf"/>
</dbReference>
<dbReference type="InterPro" id="IPR027417">
    <property type="entry name" value="P-loop_NTPase"/>
</dbReference>
<dbReference type="NCBIfam" id="TIGR01070">
    <property type="entry name" value="mutS1"/>
    <property type="match status" value="1"/>
</dbReference>
<dbReference type="NCBIfam" id="NF003810">
    <property type="entry name" value="PRK05399.1"/>
    <property type="match status" value="1"/>
</dbReference>
<dbReference type="PANTHER" id="PTHR11361:SF34">
    <property type="entry name" value="DNA MISMATCH REPAIR PROTEIN MSH1, MITOCHONDRIAL"/>
    <property type="match status" value="1"/>
</dbReference>
<dbReference type="PANTHER" id="PTHR11361">
    <property type="entry name" value="DNA MISMATCH REPAIR PROTEIN MUTS FAMILY MEMBER"/>
    <property type="match status" value="1"/>
</dbReference>
<dbReference type="Pfam" id="PF01624">
    <property type="entry name" value="MutS_I"/>
    <property type="match status" value="1"/>
</dbReference>
<dbReference type="Pfam" id="PF05188">
    <property type="entry name" value="MutS_II"/>
    <property type="match status" value="1"/>
</dbReference>
<dbReference type="Pfam" id="PF05192">
    <property type="entry name" value="MutS_III"/>
    <property type="match status" value="1"/>
</dbReference>
<dbReference type="Pfam" id="PF05190">
    <property type="entry name" value="MutS_IV"/>
    <property type="match status" value="1"/>
</dbReference>
<dbReference type="Pfam" id="PF00488">
    <property type="entry name" value="MutS_V"/>
    <property type="match status" value="1"/>
</dbReference>
<dbReference type="PIRSF" id="PIRSF037677">
    <property type="entry name" value="DNA_mis_repair_Msh6"/>
    <property type="match status" value="1"/>
</dbReference>
<dbReference type="SMART" id="SM00534">
    <property type="entry name" value="MUTSac"/>
    <property type="match status" value="1"/>
</dbReference>
<dbReference type="SMART" id="SM00533">
    <property type="entry name" value="MUTSd"/>
    <property type="match status" value="1"/>
</dbReference>
<dbReference type="SUPFAM" id="SSF55271">
    <property type="entry name" value="DNA repair protein MutS, domain I"/>
    <property type="match status" value="1"/>
</dbReference>
<dbReference type="SUPFAM" id="SSF53150">
    <property type="entry name" value="DNA repair protein MutS, domain II"/>
    <property type="match status" value="1"/>
</dbReference>
<dbReference type="SUPFAM" id="SSF48334">
    <property type="entry name" value="DNA repair protein MutS, domain III"/>
    <property type="match status" value="1"/>
</dbReference>
<dbReference type="SUPFAM" id="SSF52540">
    <property type="entry name" value="P-loop containing nucleoside triphosphate hydrolases"/>
    <property type="match status" value="1"/>
</dbReference>
<dbReference type="PROSITE" id="PS00486">
    <property type="entry name" value="DNA_MISMATCH_REPAIR_2"/>
    <property type="match status" value="1"/>
</dbReference>
<sequence length="859" mass="96754">MADYTPMMQQYLQIKEEQQDAILFFRLGDFYEMFFEDARIASRELEIVLTARDGGAGSKIPMCGVPYHSVDNYLARLINRGYKVAICEQVEDPREAKGIVKREVTRIVTPGTIIEEQLLDQAKNNFLAAVEEEPLCTGIAYIDISTGEFWLSEIAGENARSRVESEILRISPAECLLAGSGSLTGSWEEEWLRQQNITLTVWDELPLSLERAESLLLRQLQVASLESFGLKSYSAGIKAAARIIAFLEETQKTSLQHIKSLRCYSSDNFLEMDFYSRRNLELTATLREGKREGSLLSILDESRTAMGKRLLRRWIEQPLREAGEIEERLDAVDELKNTLSLRTELTPLLSRINDLERLGGKIGASVASPRDLLGLKSSLAVINDIKKALQPCRSEILQRLAAMDALEEVFALIDASINDEAPLGIKEGELIKTGYKQEIDELRELSQEGSNWLVEFENREKQRTGIKNLKVGFNKVFGYYIEITKSNLSLAPADYHRKQTLVNSERFISDELKQYEEKILGSRERLYSLEYQEFIKIREALIPYLPRVMETAHAIAILDVLQGLAEVAYQNNYIRPEIDNSGKIRIRAGRHPVVEKALREARFVPNDLQLDRDKARFAIITGPNMGGKSTFMRQAALLVLMAQMGSFIPAEEARIGLVDKIFTRVGASDDLAAGQSTFMVEMIEVANILNNASDNSLVILDEIGRGTSTYDGLSIAQAVSEYLLENSRSKVLFATHYHQLTRLAEKLPGIINLSVSVKETGNTVVFLKKVLPGKADKSYGLHVARLAGLPEKLIIRAEDILQGLEKNKDSRPAPTLLQPLLFSDSHPVVDELKQLHIDDLSPREALQLLYQWQKMLDDK</sequence>
<reference key="1">
    <citation type="journal article" date="2010" name="Environ. Microbiol.">
        <title>The genome of Syntrophomonas wolfei: new insights into syntrophic metabolism and biohydrogen production.</title>
        <authorList>
            <person name="Sieber J.R."/>
            <person name="Sims D.R."/>
            <person name="Han C."/>
            <person name="Kim E."/>
            <person name="Lykidis A."/>
            <person name="Lapidus A.L."/>
            <person name="McDonnald E."/>
            <person name="Rohlin L."/>
            <person name="Culley D.E."/>
            <person name="Gunsalus R."/>
            <person name="McInerney M.J."/>
        </authorList>
    </citation>
    <scope>NUCLEOTIDE SEQUENCE [LARGE SCALE GENOMIC DNA]</scope>
    <source>
        <strain>DSM 2245B / Goettingen</strain>
    </source>
</reference>
<keyword id="KW-0067">ATP-binding</keyword>
<keyword id="KW-0227">DNA damage</keyword>
<keyword id="KW-0234">DNA repair</keyword>
<keyword id="KW-0238">DNA-binding</keyword>
<keyword id="KW-0547">Nucleotide-binding</keyword>
<keyword id="KW-1185">Reference proteome</keyword>
<proteinExistence type="inferred from homology"/>
<accession>Q0AYB5</accession>
<comment type="function">
    <text evidence="1">This protein is involved in the repair of mismatches in DNA. It is possible that it carries out the mismatch recognition step. This protein has a weak ATPase activity.</text>
</comment>
<comment type="similarity">
    <text evidence="1">Belongs to the DNA mismatch repair MutS family.</text>
</comment>
<protein>
    <recommendedName>
        <fullName evidence="1">DNA mismatch repair protein MutS</fullName>
    </recommendedName>
</protein>
<evidence type="ECO:0000255" key="1">
    <source>
        <dbReference type="HAMAP-Rule" id="MF_00096"/>
    </source>
</evidence>
<name>MUTS_SYNWW</name>
<feature type="chain" id="PRO_0000335236" description="DNA mismatch repair protein MutS">
    <location>
        <begin position="1"/>
        <end position="859"/>
    </location>
</feature>
<feature type="binding site" evidence="1">
    <location>
        <begin position="622"/>
        <end position="629"/>
    </location>
    <ligand>
        <name>ATP</name>
        <dbReference type="ChEBI" id="CHEBI:30616"/>
    </ligand>
</feature>